<dbReference type="EMBL" id="AE016879">
    <property type="protein sequence ID" value="AAP27618.1"/>
    <property type="molecule type" value="Genomic_DNA"/>
</dbReference>
<dbReference type="EMBL" id="AE017334">
    <property type="protein sequence ID" value="AAT32998.1"/>
    <property type="molecule type" value="Genomic_DNA"/>
</dbReference>
<dbReference type="EMBL" id="AE017225">
    <property type="protein sequence ID" value="AAT55903.1"/>
    <property type="molecule type" value="Genomic_DNA"/>
</dbReference>
<dbReference type="RefSeq" id="NP_846132.1">
    <property type="nucleotide sequence ID" value="NC_003997.3"/>
</dbReference>
<dbReference type="RefSeq" id="WP_000878388.1">
    <property type="nucleotide sequence ID" value="NZ_WXXJ01000001.1"/>
</dbReference>
<dbReference type="RefSeq" id="YP_029852.1">
    <property type="nucleotide sequence ID" value="NC_005945.1"/>
</dbReference>
<dbReference type="SMR" id="Q81WT3"/>
<dbReference type="IntAct" id="Q81WT3">
    <property type="interactions" value="1"/>
</dbReference>
<dbReference type="STRING" id="261594.GBAA_3885"/>
<dbReference type="DNASU" id="1087660"/>
<dbReference type="GeneID" id="45023579"/>
<dbReference type="KEGG" id="ban:BA_3885"/>
<dbReference type="KEGG" id="banh:HYU01_18985"/>
<dbReference type="KEGG" id="bar:GBAA_3885"/>
<dbReference type="KEGG" id="bat:BAS3599"/>
<dbReference type="PATRIC" id="fig|198094.11.peg.3854"/>
<dbReference type="eggNOG" id="COG1380">
    <property type="taxonomic scope" value="Bacteria"/>
</dbReference>
<dbReference type="HOGENOM" id="CLU_113736_3_2_9"/>
<dbReference type="OMA" id="MSVMFIP"/>
<dbReference type="OrthoDB" id="3176438at2"/>
<dbReference type="Proteomes" id="UP000000427">
    <property type="component" value="Chromosome"/>
</dbReference>
<dbReference type="Proteomes" id="UP000000594">
    <property type="component" value="Chromosome"/>
</dbReference>
<dbReference type="GO" id="GO:0005886">
    <property type="term" value="C:plasma membrane"/>
    <property type="evidence" value="ECO:0007669"/>
    <property type="project" value="UniProtKB-SubCell"/>
</dbReference>
<dbReference type="GO" id="GO:0019835">
    <property type="term" value="P:cytolysis"/>
    <property type="evidence" value="ECO:0007669"/>
    <property type="project" value="UniProtKB-UniRule"/>
</dbReference>
<dbReference type="GO" id="GO:0031640">
    <property type="term" value="P:killing of cells of another organism"/>
    <property type="evidence" value="ECO:0007669"/>
    <property type="project" value="UniProtKB-KW"/>
</dbReference>
<dbReference type="GO" id="GO:0012501">
    <property type="term" value="P:programmed cell death"/>
    <property type="evidence" value="ECO:0007669"/>
    <property type="project" value="UniProtKB-UniRule"/>
</dbReference>
<dbReference type="HAMAP" id="MF_01143">
    <property type="entry name" value="CidA"/>
    <property type="match status" value="1"/>
</dbReference>
<dbReference type="InterPro" id="IPR023760">
    <property type="entry name" value="Holin-like_CidA"/>
</dbReference>
<dbReference type="InterPro" id="IPR005538">
    <property type="entry name" value="LrgA/CidA"/>
</dbReference>
<dbReference type="NCBIfam" id="NF002460">
    <property type="entry name" value="PRK01658.1"/>
    <property type="match status" value="1"/>
</dbReference>
<dbReference type="PANTHER" id="PTHR33931">
    <property type="entry name" value="HOLIN-LIKE PROTEIN CIDA-RELATED"/>
    <property type="match status" value="1"/>
</dbReference>
<dbReference type="PANTHER" id="PTHR33931:SF6">
    <property type="entry name" value="INTEGRAL MEMBRANE PROTEIN YXZK-RELATED"/>
    <property type="match status" value="1"/>
</dbReference>
<dbReference type="Pfam" id="PF03788">
    <property type="entry name" value="LrgA"/>
    <property type="match status" value="1"/>
</dbReference>
<comment type="function">
    <text evidence="1">Increases the activity of extracellular murein hydrolases possibly by mediating their export via hole formation. Inhibited by the antiholin-like proteins LrgAB. In an unstressed cell, the LrgAB products probably inhibit the function of the CidA protein. When a cell is stressed by the addition of antibiotics or by other factors in the environment, CidA possibly oligomerizes within the bacterial cell membrane, creating lesions that disrupt the proton motive force, which in turn results in loss of cell viability. These lesions are also hypothesized to regulate the subsequent cell lysis by either allowing the murein hydrolases access to the cell wall substrate and/or regulating their activity by a possible change in the cell wall pH that results from loss of membrane potential (By similarity).</text>
</comment>
<comment type="subcellular location">
    <subcellularLocation>
        <location evidence="3">Cell membrane</location>
        <topology evidence="3">Multi-pass membrane protein</topology>
    </subcellularLocation>
</comment>
<comment type="similarity">
    <text evidence="3">Belongs to the CidA/LrgA family. CidA subfamily.</text>
</comment>
<accession>Q81WT3</accession>
<accession>Q6HUY6</accession>
<accession>Q6KP62</accession>
<gene>
    <name type="primary">cidA2</name>
    <name type="ordered locus">BA_3885</name>
    <name type="ordered locus">GBAA_3885</name>
    <name type="ordered locus">BAS3599</name>
</gene>
<evidence type="ECO:0000250" key="1"/>
<evidence type="ECO:0000255" key="2"/>
<evidence type="ECO:0000305" key="3"/>
<reference key="1">
    <citation type="journal article" date="2003" name="Nature">
        <title>The genome sequence of Bacillus anthracis Ames and comparison to closely related bacteria.</title>
        <authorList>
            <person name="Read T.D."/>
            <person name="Peterson S.N."/>
            <person name="Tourasse N.J."/>
            <person name="Baillie L.W."/>
            <person name="Paulsen I.T."/>
            <person name="Nelson K.E."/>
            <person name="Tettelin H."/>
            <person name="Fouts D.E."/>
            <person name="Eisen J.A."/>
            <person name="Gill S.R."/>
            <person name="Holtzapple E.K."/>
            <person name="Okstad O.A."/>
            <person name="Helgason E."/>
            <person name="Rilstone J."/>
            <person name="Wu M."/>
            <person name="Kolonay J.F."/>
            <person name="Beanan M.J."/>
            <person name="Dodson R.J."/>
            <person name="Brinkac L.M."/>
            <person name="Gwinn M.L."/>
            <person name="DeBoy R.T."/>
            <person name="Madpu R."/>
            <person name="Daugherty S.C."/>
            <person name="Durkin A.S."/>
            <person name="Haft D.H."/>
            <person name="Nelson W.C."/>
            <person name="Peterson J.D."/>
            <person name="Pop M."/>
            <person name="Khouri H.M."/>
            <person name="Radune D."/>
            <person name="Benton J.L."/>
            <person name="Mahamoud Y."/>
            <person name="Jiang L."/>
            <person name="Hance I.R."/>
            <person name="Weidman J.F."/>
            <person name="Berry K.J."/>
            <person name="Plaut R.D."/>
            <person name="Wolf A.M."/>
            <person name="Watkins K.L."/>
            <person name="Nierman W.C."/>
            <person name="Hazen A."/>
            <person name="Cline R.T."/>
            <person name="Redmond C."/>
            <person name="Thwaite J.E."/>
            <person name="White O."/>
            <person name="Salzberg S.L."/>
            <person name="Thomason B."/>
            <person name="Friedlander A.M."/>
            <person name="Koehler T.M."/>
            <person name="Hanna P.C."/>
            <person name="Kolstoe A.-B."/>
            <person name="Fraser C.M."/>
        </authorList>
    </citation>
    <scope>NUCLEOTIDE SEQUENCE [LARGE SCALE GENOMIC DNA]</scope>
    <source>
        <strain>Ames / isolate Porton</strain>
    </source>
</reference>
<reference key="2">
    <citation type="journal article" date="2009" name="J. Bacteriol.">
        <title>The complete genome sequence of Bacillus anthracis Ames 'Ancestor'.</title>
        <authorList>
            <person name="Ravel J."/>
            <person name="Jiang L."/>
            <person name="Stanley S.T."/>
            <person name="Wilson M.R."/>
            <person name="Decker R.S."/>
            <person name="Read T.D."/>
            <person name="Worsham P."/>
            <person name="Keim P.S."/>
            <person name="Salzberg S.L."/>
            <person name="Fraser-Liggett C.M."/>
            <person name="Rasko D.A."/>
        </authorList>
    </citation>
    <scope>NUCLEOTIDE SEQUENCE [LARGE SCALE GENOMIC DNA]</scope>
    <source>
        <strain>Ames ancestor</strain>
    </source>
</reference>
<reference key="3">
    <citation type="submission" date="2004-01" db="EMBL/GenBank/DDBJ databases">
        <title>Complete genome sequence of Bacillus anthracis Sterne.</title>
        <authorList>
            <person name="Brettin T.S."/>
            <person name="Bruce D."/>
            <person name="Challacombe J.F."/>
            <person name="Gilna P."/>
            <person name="Han C."/>
            <person name="Hill K."/>
            <person name="Hitchcock P."/>
            <person name="Jackson P."/>
            <person name="Keim P."/>
            <person name="Longmire J."/>
            <person name="Lucas S."/>
            <person name="Okinaka R."/>
            <person name="Richardson P."/>
            <person name="Rubin E."/>
            <person name="Tice H."/>
        </authorList>
    </citation>
    <scope>NUCLEOTIDE SEQUENCE [LARGE SCALE GENOMIC DNA]</scope>
    <source>
        <strain>Sterne</strain>
    </source>
</reference>
<feature type="chain" id="PRO_0000213174" description="Holin-like protein CidA 2">
    <location>
        <begin position="1"/>
        <end position="118"/>
    </location>
</feature>
<feature type="transmembrane region" description="Helical" evidence="2">
    <location>
        <begin position="5"/>
        <end position="27"/>
    </location>
</feature>
<feature type="transmembrane region" description="Helical" evidence="2">
    <location>
        <begin position="31"/>
        <end position="50"/>
    </location>
</feature>
<feature type="transmembrane region" description="Helical" evidence="2">
    <location>
        <begin position="62"/>
        <end position="84"/>
    </location>
</feature>
<feature type="transmembrane region" description="Helical" evidence="2">
    <location>
        <begin position="88"/>
        <end position="110"/>
    </location>
</feature>
<protein>
    <recommendedName>
        <fullName>Holin-like protein CidA 2</fullName>
    </recommendedName>
</protein>
<organism>
    <name type="scientific">Bacillus anthracis</name>
    <dbReference type="NCBI Taxonomy" id="1392"/>
    <lineage>
        <taxon>Bacteria</taxon>
        <taxon>Bacillati</taxon>
        <taxon>Bacillota</taxon>
        <taxon>Bacilli</taxon>
        <taxon>Bacillales</taxon>
        <taxon>Bacillaceae</taxon>
        <taxon>Bacillus</taxon>
        <taxon>Bacillus cereus group</taxon>
    </lineage>
</organism>
<name>CIDA2_BACAN</name>
<keyword id="KW-1003">Cell membrane</keyword>
<keyword id="KW-0204">Cytolysis</keyword>
<keyword id="KW-0472">Membrane</keyword>
<keyword id="KW-1185">Reference proteome</keyword>
<keyword id="KW-0812">Transmembrane</keyword>
<keyword id="KW-1133">Transmembrane helix</keyword>
<proteinExistence type="inferred from homology"/>
<sequence>MKYVMLLLQVGVLYVFSLVGTWIQGVFHLSMPGSLIGMLMLFLLLSTRILPLKWFEEGAEKLLVFLPLFLIPSTTGLMEYESFLFSKGSIIFLLVVISTVVTLIVSGYISQLLVTSKK</sequence>